<gene>
    <name evidence="1" type="primary">rimP</name>
    <name type="ordered locus">PMT_1525</name>
</gene>
<evidence type="ECO:0000255" key="1">
    <source>
        <dbReference type="HAMAP-Rule" id="MF_01077"/>
    </source>
</evidence>
<name>RIMP_PROMM</name>
<organism>
    <name type="scientific">Prochlorococcus marinus (strain MIT 9313)</name>
    <dbReference type="NCBI Taxonomy" id="74547"/>
    <lineage>
        <taxon>Bacteria</taxon>
        <taxon>Bacillati</taxon>
        <taxon>Cyanobacteriota</taxon>
        <taxon>Cyanophyceae</taxon>
        <taxon>Synechococcales</taxon>
        <taxon>Prochlorococcaceae</taxon>
        <taxon>Prochlorococcus</taxon>
    </lineage>
</organism>
<comment type="function">
    <text evidence="1">Required for maturation of 30S ribosomal subunits.</text>
</comment>
<comment type="subcellular location">
    <subcellularLocation>
        <location evidence="1">Cytoplasm</location>
    </subcellularLocation>
</comment>
<comment type="similarity">
    <text evidence="1">Belongs to the RimP family.</text>
</comment>
<protein>
    <recommendedName>
        <fullName evidence="1">Ribosome maturation factor RimP</fullName>
    </recommendedName>
</protein>
<accession>Q7V5M7</accession>
<sequence length="154" mass="17104">MPHPLLPDLETLASATAAGKGYKLCCVQVFTHLIPMTIQVQIRRKDGSDVSLDDCAHFSASMDEALEASQLFTEAYVLEISSPGIGDQLHSDQDFLTFRGFPVEISFRDHDSDLHQAGLLHKRSDEHVHINIKGRIQRIPRKAVTCVRLTNPTG</sequence>
<keyword id="KW-0963">Cytoplasm</keyword>
<keyword id="KW-1185">Reference proteome</keyword>
<keyword id="KW-0690">Ribosome biogenesis</keyword>
<proteinExistence type="inferred from homology"/>
<reference key="1">
    <citation type="journal article" date="2003" name="Nature">
        <title>Genome divergence in two Prochlorococcus ecotypes reflects oceanic niche differentiation.</title>
        <authorList>
            <person name="Rocap G."/>
            <person name="Larimer F.W."/>
            <person name="Lamerdin J.E."/>
            <person name="Malfatti S."/>
            <person name="Chain P."/>
            <person name="Ahlgren N.A."/>
            <person name="Arellano A."/>
            <person name="Coleman M."/>
            <person name="Hauser L."/>
            <person name="Hess W.R."/>
            <person name="Johnson Z.I."/>
            <person name="Land M.L."/>
            <person name="Lindell D."/>
            <person name="Post A.F."/>
            <person name="Regala W."/>
            <person name="Shah M."/>
            <person name="Shaw S.L."/>
            <person name="Steglich C."/>
            <person name="Sullivan M.B."/>
            <person name="Ting C.S."/>
            <person name="Tolonen A."/>
            <person name="Webb E.A."/>
            <person name="Zinser E.R."/>
            <person name="Chisholm S.W."/>
        </authorList>
    </citation>
    <scope>NUCLEOTIDE SEQUENCE [LARGE SCALE GENOMIC DNA]</scope>
    <source>
        <strain>MIT 9313</strain>
    </source>
</reference>
<feature type="chain" id="PRO_0000181903" description="Ribosome maturation factor RimP">
    <location>
        <begin position="1"/>
        <end position="154"/>
    </location>
</feature>
<dbReference type="EMBL" id="BX548175">
    <property type="protein sequence ID" value="CAE21700.1"/>
    <property type="molecule type" value="Genomic_DNA"/>
</dbReference>
<dbReference type="RefSeq" id="WP_011130893.1">
    <property type="nucleotide sequence ID" value="NC_005071.1"/>
</dbReference>
<dbReference type="SMR" id="Q7V5M7"/>
<dbReference type="KEGG" id="pmt:PMT_1525"/>
<dbReference type="eggNOG" id="COG0779">
    <property type="taxonomic scope" value="Bacteria"/>
</dbReference>
<dbReference type="HOGENOM" id="CLU_070525_2_1_3"/>
<dbReference type="OrthoDB" id="9805006at2"/>
<dbReference type="Proteomes" id="UP000001423">
    <property type="component" value="Chromosome"/>
</dbReference>
<dbReference type="GO" id="GO:0005829">
    <property type="term" value="C:cytosol"/>
    <property type="evidence" value="ECO:0007669"/>
    <property type="project" value="TreeGrafter"/>
</dbReference>
<dbReference type="GO" id="GO:0000028">
    <property type="term" value="P:ribosomal small subunit assembly"/>
    <property type="evidence" value="ECO:0007669"/>
    <property type="project" value="TreeGrafter"/>
</dbReference>
<dbReference type="GO" id="GO:0006412">
    <property type="term" value="P:translation"/>
    <property type="evidence" value="ECO:0007669"/>
    <property type="project" value="TreeGrafter"/>
</dbReference>
<dbReference type="Gene3D" id="3.30.300.70">
    <property type="entry name" value="RimP-like superfamily, N-terminal"/>
    <property type="match status" value="1"/>
</dbReference>
<dbReference type="HAMAP" id="MF_01077">
    <property type="entry name" value="RimP"/>
    <property type="match status" value="1"/>
</dbReference>
<dbReference type="InterPro" id="IPR003728">
    <property type="entry name" value="Ribosome_maturation_RimP"/>
</dbReference>
<dbReference type="InterPro" id="IPR028989">
    <property type="entry name" value="RimP_N"/>
</dbReference>
<dbReference type="InterPro" id="IPR035956">
    <property type="entry name" value="RimP_N_sf"/>
</dbReference>
<dbReference type="NCBIfam" id="NF011227">
    <property type="entry name" value="PRK14634.1"/>
    <property type="match status" value="1"/>
</dbReference>
<dbReference type="PANTHER" id="PTHR33867">
    <property type="entry name" value="RIBOSOME MATURATION FACTOR RIMP"/>
    <property type="match status" value="1"/>
</dbReference>
<dbReference type="PANTHER" id="PTHR33867:SF1">
    <property type="entry name" value="RIBOSOME MATURATION FACTOR RIMP"/>
    <property type="match status" value="1"/>
</dbReference>
<dbReference type="Pfam" id="PF02576">
    <property type="entry name" value="RimP_N"/>
    <property type="match status" value="1"/>
</dbReference>
<dbReference type="SUPFAM" id="SSF75420">
    <property type="entry name" value="YhbC-like, N-terminal domain"/>
    <property type="match status" value="1"/>
</dbReference>